<comment type="function">
    <text evidence="1">DNA-binding protein which binds to the hairpin form of the viral telomeric sequence. Required for the production of mature virions (MV).</text>
</comment>
<comment type="subcellular location">
    <subcellularLocation>
        <location evidence="1">Virion</location>
    </subcellularLocation>
    <text evidence="1">Present in the virus core.</text>
</comment>
<comment type="induction">
    <text>Expressed in the late phase of the viral replicative cycle.</text>
</comment>
<comment type="miscellaneous">
    <text evidence="1">Each virion contains approximately 670 molecules of OPG077.</text>
</comment>
<comment type="similarity">
    <text evidence="2">Belongs to the orthopoxvirus OPG077 family.</text>
</comment>
<organism>
    <name type="scientific">Vaccinia virus (strain Ankara)</name>
    <name type="common">VACV</name>
    <dbReference type="NCBI Taxonomy" id="126794"/>
    <lineage>
        <taxon>Viruses</taxon>
        <taxon>Varidnaviria</taxon>
        <taxon>Bamfordvirae</taxon>
        <taxon>Nucleocytoviricota</taxon>
        <taxon>Pokkesviricetes</taxon>
        <taxon>Chitovirales</taxon>
        <taxon>Poxviridae</taxon>
        <taxon>Chordopoxvirinae</taxon>
        <taxon>Orthopoxvirus</taxon>
        <taxon>Vaccinia virus</taxon>
    </lineage>
</organism>
<protein>
    <recommendedName>
        <fullName>Telomere-binding protein OPG077</fullName>
    </recommendedName>
    <alternativeName>
        <fullName>Telomere-binding protein I1</fullName>
    </alternativeName>
</protein>
<feature type="chain" id="PRO_0000099557" description="Telomere-binding protein OPG077">
    <location>
        <begin position="1"/>
        <end position="312"/>
    </location>
</feature>
<sequence length="312" mass="35883">MAEFEDQLVFNSISARALKAYFTAKINEMVDELVTRKCPQKKKSQAKKPELRIPVDLVKSSFVKKFGLCNYGGILISLINSLVENNFFTKDGKLDDTGKKELVLTDVEKRILNTIDKSSPLYIDISDVKVLAARLKRSATQFNFNGHTYHLENDKIEDLINQLVKDESIQLDEKSSIKDSMYVIPDELIDVLKTRLFRSPQVKDNIISRTRLYDYFTRVTKRDESSIYVILKDPRIASILSLETVKMGAFMYTKHSMLTNAISSRVDRYSKKFQESFYEDIVEFVKENERVNVSRVVECLTVPNITISSNAE</sequence>
<name>PG077_VACCA</name>
<proteinExistence type="evidence at transcript level"/>
<keyword id="KW-0238">DNA-binding</keyword>
<keyword id="KW-0946">Virion</keyword>
<accession>O93117</accession>
<gene>
    <name type="primary">OPG077</name>
    <name type="ordered locus">MVA062L</name>
    <name type="ordered locus">ACAM3000_MVA_062</name>
    <name type="ORF">I1L</name>
</gene>
<organismHost>
    <name type="scientific">Homo sapiens</name>
    <name type="common">Human</name>
    <dbReference type="NCBI Taxonomy" id="9606"/>
</organismHost>
<reference key="1">
    <citation type="journal article" date="1998" name="Virology">
        <title>The complete genomic sequence of the modified vaccinia Ankara strain: comparison with other orthopoxviruses.</title>
        <authorList>
            <person name="Antoine G."/>
            <person name="Scheiflinger F."/>
            <person name="Dorner F."/>
            <person name="Falkner F.G."/>
        </authorList>
    </citation>
    <scope>NUCLEOTIDE SEQUENCE [LARGE SCALE GENOMIC DNA]</scope>
</reference>
<reference key="2">
    <citation type="submission" date="2004-04" db="EMBL/GenBank/DDBJ databases">
        <authorList>
            <person name="Esposito J.J."/>
            <person name="Frace M."/>
            <person name="Sammons S.A."/>
            <person name="Olsen-Rasmussen M.S."/>
            <person name="Osborne J."/>
            <person name="Khristova M."/>
            <person name="Wohlhueter R.M."/>
        </authorList>
    </citation>
    <scope>NUCLEOTIDE SEQUENCE [LARGE SCALE GENOMIC DNA]</scope>
    <source>
        <strain>Isolate Acambis 3000</strain>
    </source>
</reference>
<evidence type="ECO:0000250" key="1">
    <source>
        <dbReference type="UniProtKB" id="P16714"/>
    </source>
</evidence>
<evidence type="ECO:0000305" key="2"/>
<dbReference type="EMBL" id="U94848">
    <property type="protein sequence ID" value="AAB96433.1"/>
    <property type="molecule type" value="Genomic_DNA"/>
</dbReference>
<dbReference type="EMBL" id="AY603355">
    <property type="protein sequence ID" value="AAT10460.1"/>
    <property type="molecule type" value="Genomic_DNA"/>
</dbReference>
<dbReference type="PIR" id="T37338">
    <property type="entry name" value="T37338"/>
</dbReference>
<dbReference type="SMR" id="O93117"/>
<dbReference type="Proteomes" id="UP000159908">
    <property type="component" value="Segment"/>
</dbReference>
<dbReference type="Proteomes" id="UP000172909">
    <property type="component" value="Segment"/>
</dbReference>
<dbReference type="GO" id="GO:0044423">
    <property type="term" value="C:virion component"/>
    <property type="evidence" value="ECO:0007669"/>
    <property type="project" value="UniProtKB-KW"/>
</dbReference>
<dbReference type="GO" id="GO:0003677">
    <property type="term" value="F:DNA binding"/>
    <property type="evidence" value="ECO:0007669"/>
    <property type="project" value="UniProtKB-KW"/>
</dbReference>
<dbReference type="InterPro" id="IPR004969">
    <property type="entry name" value="Poxvirus_I1"/>
</dbReference>
<dbReference type="Pfam" id="PF03289">
    <property type="entry name" value="Pox_I1"/>
    <property type="match status" value="1"/>
</dbReference>
<dbReference type="PIRSF" id="PIRSF015625">
    <property type="entry name" value="VAC_I1L"/>
    <property type="match status" value="1"/>
</dbReference>